<proteinExistence type="inferred from homology"/>
<protein>
    <recommendedName>
        <fullName evidence="1">Serine hydroxymethyltransferase</fullName>
        <shortName evidence="1">SHMT</shortName>
        <shortName evidence="1">Serine methylase</shortName>
        <ecNumber evidence="1">2.1.2.1</ecNumber>
    </recommendedName>
</protein>
<feature type="chain" id="PRO_1000006228" description="Serine hydroxymethyltransferase">
    <location>
        <begin position="1"/>
        <end position="414"/>
    </location>
</feature>
<feature type="binding site" evidence="1">
    <location>
        <position position="116"/>
    </location>
    <ligand>
        <name>(6S)-5,6,7,8-tetrahydrofolate</name>
        <dbReference type="ChEBI" id="CHEBI:57453"/>
    </ligand>
</feature>
<feature type="binding site" evidence="1">
    <location>
        <begin position="120"/>
        <end position="122"/>
    </location>
    <ligand>
        <name>(6S)-5,6,7,8-tetrahydrofolate</name>
        <dbReference type="ChEBI" id="CHEBI:57453"/>
    </ligand>
</feature>
<feature type="binding site" evidence="1">
    <location>
        <position position="240"/>
    </location>
    <ligand>
        <name>(6S)-5,6,7,8-tetrahydrofolate</name>
        <dbReference type="ChEBI" id="CHEBI:57453"/>
    </ligand>
</feature>
<feature type="binding site" evidence="1">
    <location>
        <begin position="348"/>
        <end position="350"/>
    </location>
    <ligand>
        <name>(6S)-5,6,7,8-tetrahydrofolate</name>
        <dbReference type="ChEBI" id="CHEBI:57453"/>
    </ligand>
</feature>
<feature type="site" description="Plays an important role in substrate specificity" evidence="1">
    <location>
        <position position="223"/>
    </location>
</feature>
<feature type="modified residue" description="N6-(pyridoxal phosphate)lysine" evidence="1">
    <location>
        <position position="224"/>
    </location>
</feature>
<accession>A7ZFA4</accession>
<sequence length="414" mass="45324">MSLQSYDKDIYDLVNLELKRQCDHLEMIASENFTYPEVMEVMGSILTNKYAEGYPGKRYYGGCEFVDEIEQIAIDRCKELFGCEFANVQPNSGSQANQGVYGALLNPGDKILGMDLSHGGHLTHGAKVSSSGKMYESFFYGVELDGRINYDRVMDIAKIVKPKMIVCGASAYTREIEFKKFREIADAVGAILFADVAHIAGLVVAGEHQNPFPHCDVVSSTTHKTLRGPRGGIIMTNNEEYAKKINSSIFPGIQGGPLVHVIAAKAVGFKHNLSPEWKIYAKQVKANAKKLGKVLISRGFDLVSGGTDNHLILMSFLNRDFSGKDADIALGNAGITVNKNTVPGETRSPFITSGIRVGSPALTARGMKEAEFELIANKIADVLSDINNASLQEKIKGELKELAHKFIIYDKATF</sequence>
<reference key="1">
    <citation type="submission" date="2007-10" db="EMBL/GenBank/DDBJ databases">
        <title>Genome sequence of Campylobacter concisus 13826 isolated from human feces.</title>
        <authorList>
            <person name="Fouts D.E."/>
            <person name="Mongodin E.F."/>
            <person name="Puiu D."/>
            <person name="Sebastian Y."/>
            <person name="Miller W.G."/>
            <person name="Mandrell R.E."/>
            <person name="On S."/>
            <person name="Nelson K.E."/>
        </authorList>
    </citation>
    <scope>NUCLEOTIDE SEQUENCE [LARGE SCALE GENOMIC DNA]</scope>
    <source>
        <strain>13826</strain>
    </source>
</reference>
<gene>
    <name evidence="1" type="primary">glyA</name>
    <name type="ordered locus">Ccon26_16190</name>
    <name type="ORF">CCC13826_0226</name>
</gene>
<name>GLYA_CAMC1</name>
<dbReference type="EC" id="2.1.2.1" evidence="1"/>
<dbReference type="EMBL" id="CP000792">
    <property type="protein sequence ID" value="EAT98335.1"/>
    <property type="molecule type" value="Genomic_DNA"/>
</dbReference>
<dbReference type="RefSeq" id="WP_012140330.1">
    <property type="nucleotide sequence ID" value="NC_009802.2"/>
</dbReference>
<dbReference type="SMR" id="A7ZFA4"/>
<dbReference type="STRING" id="360104.CCC13826_0226"/>
<dbReference type="KEGG" id="cco:CCC13826_0226"/>
<dbReference type="eggNOG" id="COG0112">
    <property type="taxonomic scope" value="Bacteria"/>
</dbReference>
<dbReference type="HOGENOM" id="CLU_022477_2_1_7"/>
<dbReference type="OrthoDB" id="9803846at2"/>
<dbReference type="UniPathway" id="UPA00193"/>
<dbReference type="UniPathway" id="UPA00288">
    <property type="reaction ID" value="UER01023"/>
</dbReference>
<dbReference type="Proteomes" id="UP000001121">
    <property type="component" value="Chromosome"/>
</dbReference>
<dbReference type="GO" id="GO:0005829">
    <property type="term" value="C:cytosol"/>
    <property type="evidence" value="ECO:0007669"/>
    <property type="project" value="TreeGrafter"/>
</dbReference>
<dbReference type="GO" id="GO:0004372">
    <property type="term" value="F:glycine hydroxymethyltransferase activity"/>
    <property type="evidence" value="ECO:0007669"/>
    <property type="project" value="UniProtKB-UniRule"/>
</dbReference>
<dbReference type="GO" id="GO:0030170">
    <property type="term" value="F:pyridoxal phosphate binding"/>
    <property type="evidence" value="ECO:0007669"/>
    <property type="project" value="UniProtKB-UniRule"/>
</dbReference>
<dbReference type="GO" id="GO:0019264">
    <property type="term" value="P:glycine biosynthetic process from serine"/>
    <property type="evidence" value="ECO:0007669"/>
    <property type="project" value="UniProtKB-UniRule"/>
</dbReference>
<dbReference type="GO" id="GO:0035999">
    <property type="term" value="P:tetrahydrofolate interconversion"/>
    <property type="evidence" value="ECO:0007669"/>
    <property type="project" value="UniProtKB-UniRule"/>
</dbReference>
<dbReference type="CDD" id="cd00378">
    <property type="entry name" value="SHMT"/>
    <property type="match status" value="1"/>
</dbReference>
<dbReference type="FunFam" id="3.40.640.10:FF:000001">
    <property type="entry name" value="Serine hydroxymethyltransferase"/>
    <property type="match status" value="1"/>
</dbReference>
<dbReference type="Gene3D" id="3.90.1150.10">
    <property type="entry name" value="Aspartate Aminotransferase, domain 1"/>
    <property type="match status" value="1"/>
</dbReference>
<dbReference type="Gene3D" id="3.40.640.10">
    <property type="entry name" value="Type I PLP-dependent aspartate aminotransferase-like (Major domain)"/>
    <property type="match status" value="1"/>
</dbReference>
<dbReference type="HAMAP" id="MF_00051">
    <property type="entry name" value="SHMT"/>
    <property type="match status" value="1"/>
</dbReference>
<dbReference type="InterPro" id="IPR015424">
    <property type="entry name" value="PyrdxlP-dep_Trfase"/>
</dbReference>
<dbReference type="InterPro" id="IPR015421">
    <property type="entry name" value="PyrdxlP-dep_Trfase_major"/>
</dbReference>
<dbReference type="InterPro" id="IPR015422">
    <property type="entry name" value="PyrdxlP-dep_Trfase_small"/>
</dbReference>
<dbReference type="InterPro" id="IPR001085">
    <property type="entry name" value="Ser_HO-MeTrfase"/>
</dbReference>
<dbReference type="InterPro" id="IPR049943">
    <property type="entry name" value="Ser_HO-MeTrfase-like"/>
</dbReference>
<dbReference type="InterPro" id="IPR019798">
    <property type="entry name" value="Ser_HO-MeTrfase_PLP_BS"/>
</dbReference>
<dbReference type="InterPro" id="IPR039429">
    <property type="entry name" value="SHMT-like_dom"/>
</dbReference>
<dbReference type="NCBIfam" id="NF000586">
    <property type="entry name" value="PRK00011.1"/>
    <property type="match status" value="1"/>
</dbReference>
<dbReference type="PANTHER" id="PTHR11680">
    <property type="entry name" value="SERINE HYDROXYMETHYLTRANSFERASE"/>
    <property type="match status" value="1"/>
</dbReference>
<dbReference type="PANTHER" id="PTHR11680:SF50">
    <property type="entry name" value="SERINE HYDROXYMETHYLTRANSFERASE"/>
    <property type="match status" value="1"/>
</dbReference>
<dbReference type="Pfam" id="PF00464">
    <property type="entry name" value="SHMT"/>
    <property type="match status" value="1"/>
</dbReference>
<dbReference type="PIRSF" id="PIRSF000412">
    <property type="entry name" value="SHMT"/>
    <property type="match status" value="1"/>
</dbReference>
<dbReference type="SUPFAM" id="SSF53383">
    <property type="entry name" value="PLP-dependent transferases"/>
    <property type="match status" value="1"/>
</dbReference>
<dbReference type="PROSITE" id="PS00096">
    <property type="entry name" value="SHMT"/>
    <property type="match status" value="1"/>
</dbReference>
<evidence type="ECO:0000255" key="1">
    <source>
        <dbReference type="HAMAP-Rule" id="MF_00051"/>
    </source>
</evidence>
<keyword id="KW-0028">Amino-acid biosynthesis</keyword>
<keyword id="KW-0963">Cytoplasm</keyword>
<keyword id="KW-0554">One-carbon metabolism</keyword>
<keyword id="KW-0663">Pyridoxal phosphate</keyword>
<keyword id="KW-0808">Transferase</keyword>
<organism>
    <name type="scientific">Campylobacter concisus (strain 13826)</name>
    <dbReference type="NCBI Taxonomy" id="360104"/>
    <lineage>
        <taxon>Bacteria</taxon>
        <taxon>Pseudomonadati</taxon>
        <taxon>Campylobacterota</taxon>
        <taxon>Epsilonproteobacteria</taxon>
        <taxon>Campylobacterales</taxon>
        <taxon>Campylobacteraceae</taxon>
        <taxon>Campylobacter</taxon>
    </lineage>
</organism>
<comment type="function">
    <text evidence="1">Catalyzes the reversible interconversion of serine and glycine with tetrahydrofolate (THF) serving as the one-carbon carrier. This reaction serves as the major source of one-carbon groups required for the biosynthesis of purines, thymidylate, methionine, and other important biomolecules. Also exhibits THF-independent aldolase activity toward beta-hydroxyamino acids, producing glycine and aldehydes, via a retro-aldol mechanism.</text>
</comment>
<comment type="catalytic activity">
    <reaction evidence="1">
        <text>(6R)-5,10-methylene-5,6,7,8-tetrahydrofolate + glycine + H2O = (6S)-5,6,7,8-tetrahydrofolate + L-serine</text>
        <dbReference type="Rhea" id="RHEA:15481"/>
        <dbReference type="ChEBI" id="CHEBI:15377"/>
        <dbReference type="ChEBI" id="CHEBI:15636"/>
        <dbReference type="ChEBI" id="CHEBI:33384"/>
        <dbReference type="ChEBI" id="CHEBI:57305"/>
        <dbReference type="ChEBI" id="CHEBI:57453"/>
        <dbReference type="EC" id="2.1.2.1"/>
    </reaction>
</comment>
<comment type="cofactor">
    <cofactor evidence="1">
        <name>pyridoxal 5'-phosphate</name>
        <dbReference type="ChEBI" id="CHEBI:597326"/>
    </cofactor>
</comment>
<comment type="pathway">
    <text evidence="1">One-carbon metabolism; tetrahydrofolate interconversion.</text>
</comment>
<comment type="pathway">
    <text evidence="1">Amino-acid biosynthesis; glycine biosynthesis; glycine from L-serine: step 1/1.</text>
</comment>
<comment type="subunit">
    <text evidence="1">Homodimer.</text>
</comment>
<comment type="subcellular location">
    <subcellularLocation>
        <location evidence="1">Cytoplasm</location>
    </subcellularLocation>
</comment>
<comment type="similarity">
    <text evidence="1">Belongs to the SHMT family.</text>
</comment>